<sequence>MNQQRGFTLLEMMLVLALVAITASVVLFTYGREDVASTRARETAARFTAALELAIDRATLSGQPVGIHFSDSAWRIMVPGKTPSAWRWVPLQEDAADESQNDWDEELSIHLQPFKPDDSNQPQVVILADGQITPFSLLMANAGTGEPLLTLVCSGSWPLDQTLARDTRP</sequence>
<evidence type="ECO:0000250" key="1">
    <source>
        <dbReference type="UniProtKB" id="Q00515"/>
    </source>
</evidence>
<evidence type="ECO:0000255" key="2"/>
<evidence type="ECO:0000255" key="3">
    <source>
        <dbReference type="PROSITE-ProRule" id="PRU01070"/>
    </source>
</evidence>
<evidence type="ECO:0000269" key="4">
    <source>
    </source>
</evidence>
<evidence type="ECO:0000305" key="5"/>
<evidence type="ECO:0007829" key="6">
    <source>
        <dbReference type="PDB" id="2KNQ"/>
    </source>
</evidence>
<dbReference type="EMBL" id="U18997">
    <property type="protein sequence ID" value="AAA58126.1"/>
    <property type="molecule type" value="Genomic_DNA"/>
</dbReference>
<dbReference type="EMBL" id="U00096">
    <property type="protein sequence ID" value="AAC76354.1"/>
    <property type="molecule type" value="Genomic_DNA"/>
</dbReference>
<dbReference type="EMBL" id="AP009048">
    <property type="protein sequence ID" value="BAE77962.1"/>
    <property type="molecule type" value="Genomic_DNA"/>
</dbReference>
<dbReference type="EMBL" id="U20786">
    <property type="protein sequence ID" value="AAA69032.1"/>
    <property type="molecule type" value="Genomic_DNA"/>
</dbReference>
<dbReference type="PIR" id="D65126">
    <property type="entry name" value="D65126"/>
</dbReference>
<dbReference type="RefSeq" id="NP_417788.1">
    <property type="nucleotide sequence ID" value="NC_000913.3"/>
</dbReference>
<dbReference type="RefSeq" id="WP_001076046.1">
    <property type="nucleotide sequence ID" value="NZ_SSZK01000040.1"/>
</dbReference>
<dbReference type="PDB" id="2KNQ">
    <property type="method" value="NMR"/>
    <property type="chains" value="A=30-169"/>
</dbReference>
<dbReference type="PDBsum" id="2KNQ"/>
<dbReference type="SMR" id="P41443"/>
<dbReference type="BioGRID" id="4262246">
    <property type="interactions" value="207"/>
</dbReference>
<dbReference type="BioGRID" id="852146">
    <property type="interactions" value="3"/>
</dbReference>
<dbReference type="FunCoup" id="P41443">
    <property type="interactions" value="152"/>
</dbReference>
<dbReference type="IntAct" id="P41443">
    <property type="interactions" value="4"/>
</dbReference>
<dbReference type="STRING" id="511145.b3329"/>
<dbReference type="PaxDb" id="511145-b3329"/>
<dbReference type="DNASU" id="947834"/>
<dbReference type="EnsemblBacteria" id="AAC76354">
    <property type="protein sequence ID" value="AAC76354"/>
    <property type="gene ID" value="b3329"/>
</dbReference>
<dbReference type="GeneID" id="947834"/>
<dbReference type="KEGG" id="ecj:JW3291"/>
<dbReference type="KEGG" id="eco:b3329"/>
<dbReference type="KEGG" id="ecoc:C3026_18085"/>
<dbReference type="PATRIC" id="fig|1411691.4.peg.3402"/>
<dbReference type="EchoBASE" id="EB2724"/>
<dbReference type="eggNOG" id="COG2165">
    <property type="taxonomic scope" value="Bacteria"/>
</dbReference>
<dbReference type="HOGENOM" id="CLU_125878_1_0_6"/>
<dbReference type="InParanoid" id="P41443"/>
<dbReference type="OMA" id="YVMFNAF"/>
<dbReference type="OrthoDB" id="6076129at2"/>
<dbReference type="BioCyc" id="EcoCyc:G7707-MONOMER"/>
<dbReference type="BioCyc" id="MetaCyc:G7707-MONOMER"/>
<dbReference type="PRO" id="PR:P41443"/>
<dbReference type="Proteomes" id="UP000000625">
    <property type="component" value="Chromosome"/>
</dbReference>
<dbReference type="GO" id="GO:0005886">
    <property type="term" value="C:plasma membrane"/>
    <property type="evidence" value="ECO:0007669"/>
    <property type="project" value="UniProtKB-SubCell"/>
</dbReference>
<dbReference type="GO" id="GO:0015627">
    <property type="term" value="C:type II protein secretion system complex"/>
    <property type="evidence" value="ECO:0007669"/>
    <property type="project" value="InterPro"/>
</dbReference>
<dbReference type="GO" id="GO:0015628">
    <property type="term" value="P:protein secretion by the type II secretion system"/>
    <property type="evidence" value="ECO:0007669"/>
    <property type="project" value="InterPro"/>
</dbReference>
<dbReference type="Gene3D" id="3.55.40.10">
    <property type="entry name" value="minor pseudopilin epsh domain"/>
    <property type="match status" value="1"/>
</dbReference>
<dbReference type="InterPro" id="IPR012902">
    <property type="entry name" value="N_methyl_site"/>
</dbReference>
<dbReference type="InterPro" id="IPR045584">
    <property type="entry name" value="Pilin-like"/>
</dbReference>
<dbReference type="InterPro" id="IPR022346">
    <property type="entry name" value="T2SS_GspH"/>
</dbReference>
<dbReference type="InterPro" id="IPR002416">
    <property type="entry name" value="T2SS_protein-GspH"/>
</dbReference>
<dbReference type="InterPro" id="IPR049875">
    <property type="entry name" value="TypeII_GspH"/>
</dbReference>
<dbReference type="NCBIfam" id="TIGR02532">
    <property type="entry name" value="IV_pilin_GFxxxE"/>
    <property type="match status" value="1"/>
</dbReference>
<dbReference type="NCBIfam" id="TIGR01708">
    <property type="entry name" value="typeII_sec_gspH"/>
    <property type="match status" value="1"/>
</dbReference>
<dbReference type="Pfam" id="PF12019">
    <property type="entry name" value="GspH"/>
    <property type="match status" value="1"/>
</dbReference>
<dbReference type="Pfam" id="PF07963">
    <property type="entry name" value="N_methyl"/>
    <property type="match status" value="1"/>
</dbReference>
<dbReference type="PRINTS" id="PR00885">
    <property type="entry name" value="BCTERIALGSPH"/>
</dbReference>
<dbReference type="SUPFAM" id="SSF54523">
    <property type="entry name" value="Pili subunits"/>
    <property type="match status" value="1"/>
</dbReference>
<dbReference type="PROSITE" id="PS00409">
    <property type="entry name" value="PROKAR_NTER_METHYL"/>
    <property type="match status" value="1"/>
</dbReference>
<feature type="propeptide" id="PRO_0000024216" description="Leader sequence" evidence="3">
    <location>
        <begin position="1"/>
        <end position="6"/>
    </location>
</feature>
<feature type="chain" id="PRO_0000024217" description="Type II secretion system protein H">
    <location>
        <begin position="7"/>
        <end position="169"/>
    </location>
</feature>
<feature type="transmembrane region" description="Helical" evidence="2">
    <location>
        <begin position="7"/>
        <end position="27"/>
    </location>
</feature>
<feature type="modified residue" description="N-methylphenylalanine" evidence="3">
    <location>
        <position position="7"/>
    </location>
</feature>
<feature type="helix" evidence="6">
    <location>
        <begin position="34"/>
        <end position="61"/>
    </location>
</feature>
<feature type="strand" evidence="6">
    <location>
        <begin position="65"/>
        <end position="69"/>
    </location>
</feature>
<feature type="strand" evidence="6">
    <location>
        <begin position="74"/>
        <end position="78"/>
    </location>
</feature>
<feature type="strand" evidence="6">
    <location>
        <begin position="83"/>
        <end position="85"/>
    </location>
</feature>
<feature type="strand" evidence="6">
    <location>
        <begin position="89"/>
        <end position="91"/>
    </location>
</feature>
<feature type="turn" evidence="6">
    <location>
        <begin position="96"/>
        <end position="98"/>
    </location>
</feature>
<feature type="strand" evidence="6">
    <location>
        <begin position="99"/>
        <end position="101"/>
    </location>
</feature>
<feature type="strand" evidence="6">
    <location>
        <begin position="105"/>
        <end position="114"/>
    </location>
</feature>
<feature type="strand" evidence="6">
    <location>
        <begin position="123"/>
        <end position="126"/>
    </location>
</feature>
<feature type="strand" evidence="6">
    <location>
        <begin position="130"/>
        <end position="132"/>
    </location>
</feature>
<feature type="strand" evidence="6">
    <location>
        <begin position="135"/>
        <end position="141"/>
    </location>
</feature>
<feature type="turn" evidence="6">
    <location>
        <begin position="142"/>
        <end position="144"/>
    </location>
</feature>
<feature type="strand" evidence="6">
    <location>
        <begin position="147"/>
        <end position="158"/>
    </location>
</feature>
<feature type="strand" evidence="6">
    <location>
        <begin position="160"/>
        <end position="163"/>
    </location>
</feature>
<feature type="turn" evidence="6">
    <location>
        <begin position="164"/>
        <end position="167"/>
    </location>
</feature>
<comment type="function">
    <text evidence="1">Component of the type II secretion system required for the energy-dependent secretion of extracellular factors such as proteases and toxins from the periplasm. Part of the pseudopilus tip complex that is critical for the recognition and binding of secretion substrates.</text>
</comment>
<comment type="subunit">
    <text evidence="1">Type II secretion is composed of four main components: the outer membrane complex, the inner membrane complex, the cytoplasmic secretion ATPase and the periplasm-spanning pseudopilus. Interacts with core component GspG.</text>
</comment>
<comment type="interaction">
    <interactant intactId="EBI-1129978">
        <id>P41443</id>
    </interactant>
    <interactant intactId="EBI-544692">
        <id>P76086</id>
        <label>paaX</label>
    </interactant>
    <organismsDiffer>false</organismsDiffer>
    <experiments>2</experiments>
</comment>
<comment type="subcellular location">
    <subcellularLocation>
        <location evidence="1">Cell inner membrane</location>
        <topology evidence="2">Single-pass membrane protein</topology>
    </subcellularLocation>
</comment>
<comment type="induction">
    <text evidence="4">Silenced by the DNA-binding protein H-NS under standard growth conditions.</text>
</comment>
<comment type="PTM">
    <text evidence="1">Cleaved by prepilin peptidase.</text>
</comment>
<comment type="PTM">
    <text evidence="1">Methylated by prepilin peptidase at the amino group of the N-terminal phenylalanine once the leader sequence is cleaved by prepilin peptidase.</text>
</comment>
<comment type="miscellaneous">
    <text>Part of a cryptic operon that encodes proteins involved in type II secretion machinery in other organisms, but is not expressed in strain K12.</text>
</comment>
<comment type="similarity">
    <text evidence="5">Belongs to the GSP H family.</text>
</comment>
<accession>P41443</accession>
<accession>Q2M6Z4</accession>
<proteinExistence type="evidence at protein level"/>
<protein>
    <recommendedName>
        <fullName>Type II secretion system protein H</fullName>
        <shortName>T2SS minor pseudopilin H</shortName>
    </recommendedName>
    <alternativeName>
        <fullName>General secretion pathway protein H</fullName>
    </alternativeName>
    <alternativeName>
        <fullName>Protein transport protein HofH</fullName>
    </alternativeName>
    <alternativeName>
        <fullName>Putative general secretion pathway protein H</fullName>
    </alternativeName>
</protein>
<name>GSPH_ECOLI</name>
<organism>
    <name type="scientific">Escherichia coli (strain K12)</name>
    <dbReference type="NCBI Taxonomy" id="83333"/>
    <lineage>
        <taxon>Bacteria</taxon>
        <taxon>Pseudomonadati</taxon>
        <taxon>Pseudomonadota</taxon>
        <taxon>Gammaproteobacteria</taxon>
        <taxon>Enterobacterales</taxon>
        <taxon>Enterobacteriaceae</taxon>
        <taxon>Escherichia</taxon>
    </lineage>
</organism>
<reference key="1">
    <citation type="journal article" date="1997" name="Science">
        <title>The complete genome sequence of Escherichia coli K-12.</title>
        <authorList>
            <person name="Blattner F.R."/>
            <person name="Plunkett G. III"/>
            <person name="Bloch C.A."/>
            <person name="Perna N.T."/>
            <person name="Burland V."/>
            <person name="Riley M."/>
            <person name="Collado-Vides J."/>
            <person name="Glasner J.D."/>
            <person name="Rode C.K."/>
            <person name="Mayhew G.F."/>
            <person name="Gregor J."/>
            <person name="Davis N.W."/>
            <person name="Kirkpatrick H.A."/>
            <person name="Goeden M.A."/>
            <person name="Rose D.J."/>
            <person name="Mau B."/>
            <person name="Shao Y."/>
        </authorList>
    </citation>
    <scope>NUCLEOTIDE SEQUENCE [LARGE SCALE GENOMIC DNA]</scope>
    <source>
        <strain>K12 / MG1655 / ATCC 47076</strain>
    </source>
</reference>
<reference key="2">
    <citation type="journal article" date="2006" name="Mol. Syst. Biol.">
        <title>Highly accurate genome sequences of Escherichia coli K-12 strains MG1655 and W3110.</title>
        <authorList>
            <person name="Hayashi K."/>
            <person name="Morooka N."/>
            <person name="Yamamoto Y."/>
            <person name="Fujita K."/>
            <person name="Isono K."/>
            <person name="Choi S."/>
            <person name="Ohtsubo E."/>
            <person name="Baba T."/>
            <person name="Wanner B.L."/>
            <person name="Mori H."/>
            <person name="Horiuchi T."/>
        </authorList>
    </citation>
    <scope>NUCLEOTIDE SEQUENCE [LARGE SCALE GENOMIC DNA]</scope>
    <source>
        <strain>K12 / W3110 / ATCC 27325 / DSM 5911</strain>
    </source>
</reference>
<reference key="3">
    <citation type="journal article" date="1995" name="J. Bacteriol.">
        <title>Identification of the hopG gene, a component of Escherichia coli K-12 type II export system, and its conservation among different pathogenic Escherichia coli and Shigella isolates.</title>
        <authorList>
            <person name="Stojiljkovic I."/>
            <person name="Schoenherr R."/>
            <person name="Kusters J.G."/>
        </authorList>
    </citation>
    <scope>NUCLEOTIDE SEQUENCE [GENOMIC DNA] OF 1-30</scope>
    <source>
        <strain>K12</strain>
    </source>
</reference>
<reference key="4">
    <citation type="journal article" date="1996" name="J. Bacteriol.">
        <title>The cryptic general secretory pathway (gsp) operon of Escherichia coli K-12 encodes functional proteins.</title>
        <authorList>
            <person name="Francetic O."/>
            <person name="Pugsley A.P."/>
        </authorList>
    </citation>
    <scope>LACK OF EXPRESSION</scope>
    <scope>GENE NAME</scope>
    <source>
        <strain>K12 / MC4100 / ATCC 35695 / DSM 6574</strain>
    </source>
</reference>
<reference key="5">
    <citation type="journal article" date="2000" name="EMBO J.">
        <title>Expression of the endogenous type II secretion pathway in Escherichia coli leads to chitinase secretion.</title>
        <authorList>
            <person name="Francetic O."/>
            <person name="Belin D."/>
            <person name="Badaut C."/>
            <person name="Pugsley A.P."/>
        </authorList>
    </citation>
    <scope>LACK OF EXPRESSION</scope>
    <scope>TRANSCRIPTIONAL REGULATION</scope>
    <source>
        <strain>K12 / MC4100 / ATCC 35695 / DSM 6574</strain>
    </source>
</reference>
<gene>
    <name type="primary">gspH</name>
    <name type="synonym">hofH</name>
    <name type="synonym">hopH</name>
    <name type="ordered locus">b3329</name>
    <name type="ordered locus">JW3291</name>
</gene>
<keyword id="KW-0002">3D-structure</keyword>
<keyword id="KW-0997">Cell inner membrane</keyword>
<keyword id="KW-1003">Cell membrane</keyword>
<keyword id="KW-0472">Membrane</keyword>
<keyword id="KW-0488">Methylation</keyword>
<keyword id="KW-0653">Protein transport</keyword>
<keyword id="KW-1185">Reference proteome</keyword>
<keyword id="KW-0812">Transmembrane</keyword>
<keyword id="KW-1133">Transmembrane helix</keyword>
<keyword id="KW-0813">Transport</keyword>